<dbReference type="EC" id="1.1.1.35"/>
<dbReference type="EMBL" id="AL009126">
    <property type="protein sequence ID" value="CAB15273.2"/>
    <property type="molecule type" value="Genomic_DNA"/>
</dbReference>
<dbReference type="PIR" id="E70021">
    <property type="entry name" value="E70021"/>
</dbReference>
<dbReference type="RefSeq" id="NP_391163.2">
    <property type="nucleotide sequence ID" value="NC_000964.3"/>
</dbReference>
<dbReference type="RefSeq" id="WP_003243831.1">
    <property type="nucleotide sequence ID" value="NZ_OZ025638.1"/>
</dbReference>
<dbReference type="SMR" id="O32178"/>
<dbReference type="FunCoup" id="O32178">
    <property type="interactions" value="331"/>
</dbReference>
<dbReference type="STRING" id="224308.BSU32840"/>
<dbReference type="jPOST" id="O32178"/>
<dbReference type="PaxDb" id="224308-BSU32840"/>
<dbReference type="EnsemblBacteria" id="CAB15273">
    <property type="protein sequence ID" value="CAB15273"/>
    <property type="gene ID" value="BSU_32840"/>
</dbReference>
<dbReference type="GeneID" id="937125"/>
<dbReference type="KEGG" id="bsu:BSU32840"/>
<dbReference type="PATRIC" id="fig|224308.179.peg.3558"/>
<dbReference type="eggNOG" id="COG1024">
    <property type="taxonomic scope" value="Bacteria"/>
</dbReference>
<dbReference type="eggNOG" id="COG1250">
    <property type="taxonomic scope" value="Bacteria"/>
</dbReference>
<dbReference type="InParanoid" id="O32178"/>
<dbReference type="OrthoDB" id="9771883at2"/>
<dbReference type="BioCyc" id="BSUB:BSU32840-MONOMER"/>
<dbReference type="UniPathway" id="UPA00659"/>
<dbReference type="Proteomes" id="UP000001570">
    <property type="component" value="Chromosome"/>
</dbReference>
<dbReference type="GO" id="GO:0003857">
    <property type="term" value="F:3-hydroxyacyl-CoA dehydrogenase activity"/>
    <property type="evidence" value="ECO:0007669"/>
    <property type="project" value="UniProtKB-EC"/>
</dbReference>
<dbReference type="GO" id="GO:0070403">
    <property type="term" value="F:NAD+ binding"/>
    <property type="evidence" value="ECO:0007669"/>
    <property type="project" value="InterPro"/>
</dbReference>
<dbReference type="GO" id="GO:0016491">
    <property type="term" value="F:oxidoreductase activity"/>
    <property type="evidence" value="ECO:0000318"/>
    <property type="project" value="GO_Central"/>
</dbReference>
<dbReference type="GO" id="GO:0006635">
    <property type="term" value="P:fatty acid beta-oxidation"/>
    <property type="evidence" value="ECO:0007669"/>
    <property type="project" value="UniProtKB-UniPathway"/>
</dbReference>
<dbReference type="CDD" id="cd06558">
    <property type="entry name" value="crotonase-like"/>
    <property type="match status" value="1"/>
</dbReference>
<dbReference type="Gene3D" id="1.10.1040.50">
    <property type="match status" value="1"/>
</dbReference>
<dbReference type="Gene3D" id="3.90.226.10">
    <property type="entry name" value="2-enoyl-CoA Hydratase, Chain A, domain 1"/>
    <property type="match status" value="1"/>
</dbReference>
<dbReference type="Gene3D" id="3.40.50.720">
    <property type="entry name" value="NAD(P)-binding Rossmann-like Domain"/>
    <property type="match status" value="1"/>
</dbReference>
<dbReference type="InterPro" id="IPR006176">
    <property type="entry name" value="3-OHacyl-CoA_DH_NAD-bd"/>
</dbReference>
<dbReference type="InterPro" id="IPR006108">
    <property type="entry name" value="3HC_DH_C"/>
</dbReference>
<dbReference type="InterPro" id="IPR008927">
    <property type="entry name" value="6-PGluconate_DH-like_C_sf"/>
</dbReference>
<dbReference type="InterPro" id="IPR029045">
    <property type="entry name" value="ClpP/crotonase-like_dom_sf"/>
</dbReference>
<dbReference type="InterPro" id="IPR001753">
    <property type="entry name" value="Enoyl-CoA_hydra/iso"/>
</dbReference>
<dbReference type="InterPro" id="IPR036291">
    <property type="entry name" value="NAD(P)-bd_dom_sf"/>
</dbReference>
<dbReference type="PANTHER" id="PTHR48075">
    <property type="entry name" value="3-HYDROXYACYL-COA DEHYDROGENASE FAMILY PROTEIN"/>
    <property type="match status" value="1"/>
</dbReference>
<dbReference type="PANTHER" id="PTHR48075:SF7">
    <property type="entry name" value="3-HYDROXYACYL-COA DEHYDROGENASE-RELATED"/>
    <property type="match status" value="1"/>
</dbReference>
<dbReference type="Pfam" id="PF00725">
    <property type="entry name" value="3HCDH"/>
    <property type="match status" value="2"/>
</dbReference>
<dbReference type="Pfam" id="PF02737">
    <property type="entry name" value="3HCDH_N"/>
    <property type="match status" value="1"/>
</dbReference>
<dbReference type="Pfam" id="PF00378">
    <property type="entry name" value="ECH_1"/>
    <property type="match status" value="1"/>
</dbReference>
<dbReference type="SUPFAM" id="SSF48179">
    <property type="entry name" value="6-phosphogluconate dehydrogenase C-terminal domain-like"/>
    <property type="match status" value="2"/>
</dbReference>
<dbReference type="SUPFAM" id="SSF52096">
    <property type="entry name" value="ClpP/crotonase"/>
    <property type="match status" value="1"/>
</dbReference>
<dbReference type="SUPFAM" id="SSF51735">
    <property type="entry name" value="NAD(P)-binding Rossmann-fold domains"/>
    <property type="match status" value="1"/>
</dbReference>
<gene>
    <name type="primary">fadN</name>
    <name type="synonym">yusL</name>
    <name type="ordered locus">BSU32840</name>
</gene>
<comment type="function">
    <text>Involved in the degradation of long-chain fatty acids.</text>
</comment>
<comment type="catalytic activity">
    <reaction>
        <text>a (3S)-3-hydroxyacyl-CoA + NAD(+) = a 3-oxoacyl-CoA + NADH + H(+)</text>
        <dbReference type="Rhea" id="RHEA:22432"/>
        <dbReference type="ChEBI" id="CHEBI:15378"/>
        <dbReference type="ChEBI" id="CHEBI:57318"/>
        <dbReference type="ChEBI" id="CHEBI:57540"/>
        <dbReference type="ChEBI" id="CHEBI:57945"/>
        <dbReference type="ChEBI" id="CHEBI:90726"/>
        <dbReference type="EC" id="1.1.1.35"/>
    </reaction>
</comment>
<comment type="pathway">
    <text>Lipid metabolism; fatty acid beta-oxidation.</text>
</comment>
<comment type="induction">
    <text evidence="1">Repressed by FadR in the absence of LCFAs (fatty acids of 14-20 carbon atoms). When LCFAs are present in the medium, they are converted to long-chain acyl-CoAs, which antagonize FadR as to its binding to fadR boxes on target DNA and thus derepress transcription.</text>
</comment>
<comment type="similarity">
    <text evidence="2">Belongs to the 3-hydroxyacyl-CoA dehydrogenase family.</text>
</comment>
<feature type="chain" id="PRO_0000360673" description="Probable 3-hydroxyacyl-CoA dehydrogenase">
    <location>
        <begin position="1"/>
        <end position="789"/>
    </location>
</feature>
<sequence>MHKHIRKAAVLGSGVMGSGIAAHLANIGIPVLLLDIVPNDLTKEEEKKGLTKDSSEVRSRLSRQAMKKLLKQKPAPLTSAKNTSYITPGNLEDDAEKLKEADWIIEVVVENLEVKKKIFALVDEHRKTGSIVSSNTSGISVQEMAEGRSDDFKAHFLGTHFFNPARYLKLLEIIPIKETDPDILKFMTAFGENVLGKGVVTAKDTPNFIANRIGTYGLLVTVQEMLKGGYQVGEVDSITGPLIGRPKSATFRTLDVVGLDTFAHVARNVYDKADGDEKEVFRIPSFMNDMLEKGWIGSKAGQGFYKKEGKTIYELDPVTLTYGERTKMKSPALEAAKQAKGTKAKMKALIYSDDRAGRLLWNITSQTLLYSAELLGEIADDIHAIDQAMKWGFGWELGPFEMWDAIGLKQSAEKLEQLGADMPGWIKEMLDKGNETFYIKENGTVFYYDRGEYRAVKENKKRIHLQALKETKGVIAKNSGASLIDLGDDVALLEFHSKSNAIGLDIIQMIHKGLEETERNYKGLVIGNQGKNFCVGANLAMILMEVQDDNFLEVDFVIRRFQETMMKIKYSAKPVVAAPFGMTLGGGTEACLPAARIQAASEAYMGLVESGVGLIPGGGGNKELYINHLRRGHDPMNAAMKTFETIAMAKVSASAQEAREMNILKETDQISVNQDHLLYDAKQLAASLYDTGWRPPVKEKVKVPGETGYAALLLGAEQMKLSGYISEHDFKIAKKLAYVIAGGKVPFGTEVDEEYLLEIEREAFLSLSGEAKSQARMQHMLVKGKPLRN</sequence>
<reference key="1">
    <citation type="journal article" date="1997" name="Nature">
        <title>The complete genome sequence of the Gram-positive bacterium Bacillus subtilis.</title>
        <authorList>
            <person name="Kunst F."/>
            <person name="Ogasawara N."/>
            <person name="Moszer I."/>
            <person name="Albertini A.M."/>
            <person name="Alloni G."/>
            <person name="Azevedo V."/>
            <person name="Bertero M.G."/>
            <person name="Bessieres P."/>
            <person name="Bolotin A."/>
            <person name="Borchert S."/>
            <person name="Borriss R."/>
            <person name="Boursier L."/>
            <person name="Brans A."/>
            <person name="Braun M."/>
            <person name="Brignell S.C."/>
            <person name="Bron S."/>
            <person name="Brouillet S."/>
            <person name="Bruschi C.V."/>
            <person name="Caldwell B."/>
            <person name="Capuano V."/>
            <person name="Carter N.M."/>
            <person name="Choi S.-K."/>
            <person name="Codani J.-J."/>
            <person name="Connerton I.F."/>
            <person name="Cummings N.J."/>
            <person name="Daniel R.A."/>
            <person name="Denizot F."/>
            <person name="Devine K.M."/>
            <person name="Duesterhoeft A."/>
            <person name="Ehrlich S.D."/>
            <person name="Emmerson P.T."/>
            <person name="Entian K.-D."/>
            <person name="Errington J."/>
            <person name="Fabret C."/>
            <person name="Ferrari E."/>
            <person name="Foulger D."/>
            <person name="Fritz C."/>
            <person name="Fujita M."/>
            <person name="Fujita Y."/>
            <person name="Fuma S."/>
            <person name="Galizzi A."/>
            <person name="Galleron N."/>
            <person name="Ghim S.-Y."/>
            <person name="Glaser P."/>
            <person name="Goffeau A."/>
            <person name="Golightly E.J."/>
            <person name="Grandi G."/>
            <person name="Guiseppi G."/>
            <person name="Guy B.J."/>
            <person name="Haga K."/>
            <person name="Haiech J."/>
            <person name="Harwood C.R."/>
            <person name="Henaut A."/>
            <person name="Hilbert H."/>
            <person name="Holsappel S."/>
            <person name="Hosono S."/>
            <person name="Hullo M.-F."/>
            <person name="Itaya M."/>
            <person name="Jones L.-M."/>
            <person name="Joris B."/>
            <person name="Karamata D."/>
            <person name="Kasahara Y."/>
            <person name="Klaerr-Blanchard M."/>
            <person name="Klein C."/>
            <person name="Kobayashi Y."/>
            <person name="Koetter P."/>
            <person name="Koningstein G."/>
            <person name="Krogh S."/>
            <person name="Kumano M."/>
            <person name="Kurita K."/>
            <person name="Lapidus A."/>
            <person name="Lardinois S."/>
            <person name="Lauber J."/>
            <person name="Lazarevic V."/>
            <person name="Lee S.-M."/>
            <person name="Levine A."/>
            <person name="Liu H."/>
            <person name="Masuda S."/>
            <person name="Mauel C."/>
            <person name="Medigue C."/>
            <person name="Medina N."/>
            <person name="Mellado R.P."/>
            <person name="Mizuno M."/>
            <person name="Moestl D."/>
            <person name="Nakai S."/>
            <person name="Noback M."/>
            <person name="Noone D."/>
            <person name="O'Reilly M."/>
            <person name="Ogawa K."/>
            <person name="Ogiwara A."/>
            <person name="Oudega B."/>
            <person name="Park S.-H."/>
            <person name="Parro V."/>
            <person name="Pohl T.M."/>
            <person name="Portetelle D."/>
            <person name="Porwollik S."/>
            <person name="Prescott A.M."/>
            <person name="Presecan E."/>
            <person name="Pujic P."/>
            <person name="Purnelle B."/>
            <person name="Rapoport G."/>
            <person name="Rey M."/>
            <person name="Reynolds S."/>
            <person name="Rieger M."/>
            <person name="Rivolta C."/>
            <person name="Rocha E."/>
            <person name="Roche B."/>
            <person name="Rose M."/>
            <person name="Sadaie Y."/>
            <person name="Sato T."/>
            <person name="Scanlan E."/>
            <person name="Schleich S."/>
            <person name="Schroeter R."/>
            <person name="Scoffone F."/>
            <person name="Sekiguchi J."/>
            <person name="Sekowska A."/>
            <person name="Seror S.J."/>
            <person name="Serror P."/>
            <person name="Shin B.-S."/>
            <person name="Soldo B."/>
            <person name="Sorokin A."/>
            <person name="Tacconi E."/>
            <person name="Takagi T."/>
            <person name="Takahashi H."/>
            <person name="Takemaru K."/>
            <person name="Takeuchi M."/>
            <person name="Tamakoshi A."/>
            <person name="Tanaka T."/>
            <person name="Terpstra P."/>
            <person name="Tognoni A."/>
            <person name="Tosato V."/>
            <person name="Uchiyama S."/>
            <person name="Vandenbol M."/>
            <person name="Vannier F."/>
            <person name="Vassarotti A."/>
            <person name="Viari A."/>
            <person name="Wambutt R."/>
            <person name="Wedler E."/>
            <person name="Wedler H."/>
            <person name="Weitzenegger T."/>
            <person name="Winters P."/>
            <person name="Wipat A."/>
            <person name="Yamamoto H."/>
            <person name="Yamane K."/>
            <person name="Yasumoto K."/>
            <person name="Yata K."/>
            <person name="Yoshida K."/>
            <person name="Yoshikawa H.-F."/>
            <person name="Zumstein E."/>
            <person name="Yoshikawa H."/>
            <person name="Danchin A."/>
        </authorList>
    </citation>
    <scope>NUCLEOTIDE SEQUENCE [LARGE SCALE GENOMIC DNA]</scope>
    <source>
        <strain>168</strain>
    </source>
</reference>
<reference key="2">
    <citation type="journal article" date="2007" name="J. Biol. Chem.">
        <title>Organization and function of the YsiA regulon of Bacillus subtilis involved in fatty acid degradation.</title>
        <authorList>
            <person name="Matsuoka H."/>
            <person name="Hirooka K."/>
            <person name="Fujita Y."/>
        </authorList>
    </citation>
    <scope>INDUCTION</scope>
    <scope>GENE NAME</scope>
    <scope>IDENTIFICATION OF INITIATION SITE</scope>
    <source>
        <strain>168</strain>
    </source>
</reference>
<proteinExistence type="evidence at transcript level"/>
<name>FADN_BACSU</name>
<accession>O32178</accession>
<keyword id="KW-0276">Fatty acid metabolism</keyword>
<keyword id="KW-0442">Lipid degradation</keyword>
<keyword id="KW-0443">Lipid metabolism</keyword>
<keyword id="KW-0520">NAD</keyword>
<keyword id="KW-0560">Oxidoreductase</keyword>
<keyword id="KW-1185">Reference proteome</keyword>
<organism>
    <name type="scientific">Bacillus subtilis (strain 168)</name>
    <dbReference type="NCBI Taxonomy" id="224308"/>
    <lineage>
        <taxon>Bacteria</taxon>
        <taxon>Bacillati</taxon>
        <taxon>Bacillota</taxon>
        <taxon>Bacilli</taxon>
        <taxon>Bacillales</taxon>
        <taxon>Bacillaceae</taxon>
        <taxon>Bacillus</taxon>
    </lineage>
</organism>
<evidence type="ECO:0000269" key="1">
    <source>
    </source>
</evidence>
<evidence type="ECO:0000305" key="2"/>
<protein>
    <recommendedName>
        <fullName>Probable 3-hydroxyacyl-CoA dehydrogenase</fullName>
        <ecNumber>1.1.1.35</ecNumber>
    </recommendedName>
</protein>